<reference evidence="7 8" key="1">
    <citation type="journal article" date="2007" name="Appl. Environ. Microbiol.">
        <title>Alpha-agarases define a new family of glycoside hydrolases, distinct from beta-agarase families.</title>
        <authorList>
            <person name="Flament D."/>
            <person name="Barbeyron T."/>
            <person name="Jam M."/>
            <person name="Potin P."/>
            <person name="Czjzek M."/>
            <person name="Kloareg B."/>
            <person name="Michel G."/>
        </authorList>
    </citation>
    <scope>NUCLEOTIDE SEQUENCE [GENOMIC DNA]</scope>
    <scope>PROTEIN SEQUENCE OF 27-43 AND 802-821</scope>
    <source>
        <strain evidence="8">GJ1B</strain>
    </source>
</reference>
<reference evidence="7" key="2">
    <citation type="journal article" date="1993" name="Eur. J. Biochem.">
        <title>Purification and characterization of the alpha-agarase from Alteromonas agarlyticus (Cataldi) comb. nov., strain GJ1B.</title>
        <authorList>
            <person name="Potin P."/>
            <person name="Richard C."/>
            <person name="Rochas C."/>
            <person name="Kloareg B."/>
        </authorList>
    </citation>
    <scope>FUNCTION</scope>
    <scope>CATALYTIC ACTIVITY</scope>
    <scope>COFACTOR</scope>
    <scope>BIOPHYSICOCHEMICAL PROPERTIES</scope>
    <scope>SUBUNIT</scope>
</reference>
<proteinExistence type="evidence at protein level"/>
<feature type="signal peptide" evidence="5">
    <location>
        <begin position="1"/>
        <end position="26"/>
    </location>
</feature>
<feature type="chain" id="PRO_5000055969" description="Alpha-agarase" evidence="5">
    <location>
        <begin position="27"/>
        <end position="1429"/>
    </location>
</feature>
<feature type="domain" description="CBM6 1" evidence="2">
    <location>
        <begin position="29"/>
        <end position="161"/>
    </location>
</feature>
<feature type="domain" description="CBM6 2" evidence="2">
    <location>
        <begin position="211"/>
        <end position="345"/>
    </location>
</feature>
<feature type="domain" description="PA14" evidence="3">
    <location>
        <begin position="490"/>
        <end position="638"/>
    </location>
</feature>
<feature type="domain" description="CBM6 3" evidence="2">
    <location>
        <begin position="662"/>
        <end position="793"/>
    </location>
</feature>
<feature type="region of interest" description="Disordered" evidence="4">
    <location>
        <begin position="349"/>
        <end position="400"/>
    </location>
</feature>
<feature type="region of interest" description="Disordered" evidence="4">
    <location>
        <begin position="474"/>
        <end position="495"/>
    </location>
</feature>
<feature type="compositionally biased region" description="Polar residues" evidence="4">
    <location>
        <begin position="369"/>
        <end position="378"/>
    </location>
</feature>
<feature type="sequence conflict" description="In Ref. 1; AA sequence." evidence="7" ref="1">
    <original>TY</original>
    <variation>FF</variation>
    <location>
        <begin position="42"/>
        <end position="43"/>
    </location>
</feature>
<evidence type="ECO:0000255" key="1"/>
<evidence type="ECO:0000255" key="2">
    <source>
        <dbReference type="PROSITE-ProRule" id="PRU00523"/>
    </source>
</evidence>
<evidence type="ECO:0000255" key="3">
    <source>
        <dbReference type="PROSITE-ProRule" id="PRU01164"/>
    </source>
</evidence>
<evidence type="ECO:0000256" key="4">
    <source>
        <dbReference type="SAM" id="MobiDB-lite"/>
    </source>
</evidence>
<evidence type="ECO:0000269" key="5">
    <source>
    </source>
</evidence>
<evidence type="ECO:0000269" key="6">
    <source>
    </source>
</evidence>
<evidence type="ECO:0000305" key="7"/>
<evidence type="ECO:0000312" key="8">
    <source>
        <dbReference type="EMBL" id="AAF26838.1"/>
    </source>
</evidence>
<dbReference type="EC" id="3.2.1.158"/>
<dbReference type="EMBL" id="AF121273">
    <property type="protein sequence ID" value="AAF26838.1"/>
    <property type="molecule type" value="Genomic_DNA"/>
</dbReference>
<dbReference type="CAZy" id="CBM6">
    <property type="family name" value="Carbohydrate-Binding Module Family 6"/>
</dbReference>
<dbReference type="CAZy" id="GH96">
    <property type="family name" value="Glycoside Hydrolase Family 96"/>
</dbReference>
<dbReference type="KEGG" id="ag:AAF26838"/>
<dbReference type="BioCyc" id="MetaCyc:MONOMER-16655"/>
<dbReference type="BRENDA" id="3.2.1.158">
    <property type="organism ID" value="8321"/>
</dbReference>
<dbReference type="GO" id="GO:0033953">
    <property type="term" value="F:alpha-agarase activity"/>
    <property type="evidence" value="ECO:0007669"/>
    <property type="project" value="UniProtKB-EC"/>
</dbReference>
<dbReference type="GO" id="GO:0005509">
    <property type="term" value="F:calcium ion binding"/>
    <property type="evidence" value="ECO:0007669"/>
    <property type="project" value="InterPro"/>
</dbReference>
<dbReference type="GO" id="GO:0030246">
    <property type="term" value="F:carbohydrate binding"/>
    <property type="evidence" value="ECO:0007669"/>
    <property type="project" value="InterPro"/>
</dbReference>
<dbReference type="GO" id="GO:0007155">
    <property type="term" value="P:cell adhesion"/>
    <property type="evidence" value="ECO:0007669"/>
    <property type="project" value="InterPro"/>
</dbReference>
<dbReference type="GO" id="GO:0000272">
    <property type="term" value="P:polysaccharide catabolic process"/>
    <property type="evidence" value="ECO:0007669"/>
    <property type="project" value="UniProtKB-KW"/>
</dbReference>
<dbReference type="CDD" id="cd04079">
    <property type="entry name" value="CBM6_agarase-like"/>
    <property type="match status" value="3"/>
</dbReference>
<dbReference type="Gene3D" id="2.60.120.260">
    <property type="entry name" value="Galactose-binding domain-like"/>
    <property type="match status" value="3"/>
</dbReference>
<dbReference type="Gene3D" id="4.10.1080.10">
    <property type="entry name" value="TSP type-3 repeat"/>
    <property type="match status" value="1"/>
</dbReference>
<dbReference type="InterPro" id="IPR005084">
    <property type="entry name" value="CBM6"/>
</dbReference>
<dbReference type="InterPro" id="IPR006584">
    <property type="entry name" value="Cellulose-bd_IV"/>
</dbReference>
<dbReference type="InterPro" id="IPR029070">
    <property type="entry name" value="Chitinase_insertion_sf"/>
</dbReference>
<dbReference type="InterPro" id="IPR008979">
    <property type="entry name" value="Galactose-bd-like_sf"/>
</dbReference>
<dbReference type="InterPro" id="IPR037524">
    <property type="entry name" value="PA14/GLEYA"/>
</dbReference>
<dbReference type="InterPro" id="IPR003367">
    <property type="entry name" value="Thrombospondin_3-like_rpt"/>
</dbReference>
<dbReference type="InterPro" id="IPR028974">
    <property type="entry name" value="TSP_type-3_rpt"/>
</dbReference>
<dbReference type="PANTHER" id="PTHR10199:SF119">
    <property type="entry name" value="RE20510P"/>
    <property type="match status" value="1"/>
</dbReference>
<dbReference type="PANTHER" id="PTHR10199">
    <property type="entry name" value="THROMBOSPONDIN"/>
    <property type="match status" value="1"/>
</dbReference>
<dbReference type="Pfam" id="PF03422">
    <property type="entry name" value="CBM_6"/>
    <property type="match status" value="3"/>
</dbReference>
<dbReference type="Pfam" id="PF02412">
    <property type="entry name" value="TSP_3"/>
    <property type="match status" value="5"/>
</dbReference>
<dbReference type="SMART" id="SM00606">
    <property type="entry name" value="CBD_IV"/>
    <property type="match status" value="1"/>
</dbReference>
<dbReference type="SUPFAM" id="SSF54556">
    <property type="entry name" value="Chitinase insertion domain"/>
    <property type="match status" value="1"/>
</dbReference>
<dbReference type="SUPFAM" id="SSF49785">
    <property type="entry name" value="Galactose-binding domain-like"/>
    <property type="match status" value="3"/>
</dbReference>
<dbReference type="SUPFAM" id="SSF103647">
    <property type="entry name" value="TSP type-3 repeat"/>
    <property type="match status" value="3"/>
</dbReference>
<dbReference type="PROSITE" id="PS51175">
    <property type="entry name" value="CBM6"/>
    <property type="match status" value="3"/>
</dbReference>
<dbReference type="PROSITE" id="PS51820">
    <property type="entry name" value="PA14"/>
    <property type="match status" value="1"/>
</dbReference>
<comment type="function">
    <text evidence="6">Alpha-agarase. Does not hydrolyze agarotetraose, agarohexaose, kappa-carrageenan, iota-carrageenan or lambda-carrageenan.</text>
</comment>
<comment type="catalytic activity">
    <reaction evidence="6">
        <text>Endohydrolysis of 1,3-alpha-L-galactosidic linkages in agarose, yielding agarotetraose as the major product.</text>
        <dbReference type="EC" id="3.2.1.158"/>
    </reaction>
</comment>
<comment type="cofactor">
    <cofactor evidence="6">
        <name>Ca(2+)</name>
        <dbReference type="ChEBI" id="CHEBI:29108"/>
    </cofactor>
</comment>
<comment type="biophysicochemical properties">
    <phDependence>
        <text evidence="6">Optimum pH is 7.2. Active between pH 6.0 and 9.0.</text>
    </phDependence>
    <temperatureDependence>
        <text evidence="6">Inactive above 60 degrees Celsius.</text>
    </temperatureDependence>
</comment>
<comment type="subunit">
    <text evidence="6">Homodimer.</text>
</comment>
<comment type="similarity">
    <text evidence="1">Belongs to the glycosyl hydrolase 96 family.</text>
</comment>
<accession>Q9LAP7</accession>
<sequence>MFKTKRSLLNSSIAISFAVLGVQAQAETLELQAESFANSGGTYSDGQPNPVTIYNVNGQGAINFVNAGDYVDYNINALGGEYDIEYFVGTGVTSGPNIEVLVDVNGTWQSQGSVAVPYGSWDDFQSLTPSHTVTLPVGTSTVRLLAVGSTWQWNLESFRLTQVSPVEPVGDADNDGVNDNQDLCPNSPSGVTVDNNGCQITGGTDPGGESFVIQMEAFDSTGSDDSRAKGVIIGERGYPQDKHTVVDSVQTTDWVDYSINFPSSANYSVSMLASGQTDHATAVLYLDGTEINEVPVHTGSQADFANFQLAGSVYIASGTHTIRVQAQSSTGEFSWLWFGDALTFTNLDSDGGNGGEATQDADNDGVLDSSDSCPNTPTGEPADVTGCSASQLDDDNDGVSNNVDQCPNTVAGTEVDADGCEVIFADADNDGIEDSQDFCPNTPAGEAVNNSGCGASQLDADNDGVTNNIDQCPNTPAGTQVDASGCETDNGGEPGDSYYHNGQGLLFGRVDGATNFLGEEGYVANPDNYDVTTDLLETDDAIRANSTEVFRGEIYDADGHIAFYEHIDDSVRLYIDGQLVLSNDSWENSSQTTDLNLTPGWHNFELRLGNADGGSGAVSGIGFGIDVDGGTNFVHPSNLSPSMFRASGQVVVDPILPPSGGIYIQLEDFDETGTVGRVASDPNDGFVKGDSNVGWVTNGDWGKYHNVFLEAGTYRAFITVSTPAGGSYGARVDIDGEPFAWGYFDSTGGWDIAAEYELYGGHLVVESTGNHTLHVEAVGGSDWQWSGDLVRLAKVSDSAVKQPRVYNPNEHIVAEIQGPATGLQYLKTPVEIPLANKVLKSDVWYTYPQNRNLVVDGDTPYADFGATGAFWGHPPEHDFYDDTVIMDWAVNVVDDFQSEGFEYTARGEFDWGYGWFTEFTTNPQPHYVQTLDGRNVRMTFMGYLSHDGYNNNWLSNHSPAFVPFMKSQVDQILKANPDKLMFDTQTNSTRSTDMRTFGGDFSPYAMENFRVWLLKKYSNAQLVSMGINDITSFDYGAYLRAQGITHTDWSNAGDTISGNIPMMEDFIYFNRDVWNQKFAEVLEYIRQQRPNIEIGASTHLFESRGYIFNENITFLSGELNLGARTSISELPTNILVHLKGAQAVDKTLAYFPYPWEFDELRIQNAPRFGRGWVAQAYAYGGLFSIPANVWVGGEVFTWSPGADNYRDIYQFVRAQANLLDGYTSYAKAGYVHAMFSSMKAGFIDGGNQVQSSVKILTEDNINFDMLVFGDAGYPVVPRQADFDKFEYIFYDGDLNYLTAEQQAVLDAQGSKVKHIGQRGTIAGLQINVSINGSVSNETVSAVSRIHETDSTAPYVVHLINRPFAGGVTPILNNVEVAIPASYFPQGVTSAKLHLPDGSSSTVAVSTNANGDTVVSVSNLEVWGILELAH</sequence>
<protein>
    <recommendedName>
        <fullName evidence="8">Alpha-agarase</fullName>
        <ecNumber>3.2.1.158</ecNumber>
    </recommendedName>
</protein>
<name>AAGAR_ALTAG</name>
<organism>
    <name type="scientific">Alteromonas agarilytica</name>
    <dbReference type="NCBI Taxonomy" id="105692"/>
    <lineage>
        <taxon>Bacteria</taxon>
        <taxon>Pseudomonadati</taxon>
        <taxon>Pseudomonadota</taxon>
        <taxon>Gammaproteobacteria</taxon>
        <taxon>Alteromonadales</taxon>
        <taxon>Alteromonadaceae</taxon>
        <taxon>Alteromonas/Salinimonas group</taxon>
        <taxon>Alteromonas</taxon>
    </lineage>
</organism>
<gene>
    <name evidence="8" type="primary">agaA</name>
</gene>
<keyword id="KW-0106">Calcium</keyword>
<keyword id="KW-0119">Carbohydrate metabolism</keyword>
<keyword id="KW-0903">Direct protein sequencing</keyword>
<keyword id="KW-0326">Glycosidase</keyword>
<keyword id="KW-0378">Hydrolase</keyword>
<keyword id="KW-0479">Metal-binding</keyword>
<keyword id="KW-0624">Polysaccharide degradation</keyword>
<keyword id="KW-0677">Repeat</keyword>
<keyword id="KW-0732">Signal</keyword>